<comment type="function">
    <text evidence="1">DNA ligase that catalyzes the formation of phosphodiester linkages between 5'-phosphoryl and 3'-hydroxyl groups in double-stranded DNA using NAD as a coenzyme and as the energy source for the reaction. It is essential for DNA replication and repair of damaged DNA.</text>
</comment>
<comment type="catalytic activity">
    <reaction evidence="1">
        <text>NAD(+) + (deoxyribonucleotide)n-3'-hydroxyl + 5'-phospho-(deoxyribonucleotide)m = (deoxyribonucleotide)n+m + AMP + beta-nicotinamide D-nucleotide.</text>
        <dbReference type="EC" id="6.5.1.2"/>
    </reaction>
</comment>
<comment type="cofactor">
    <cofactor evidence="1">
        <name>Mg(2+)</name>
        <dbReference type="ChEBI" id="CHEBI:18420"/>
    </cofactor>
    <cofactor evidence="1">
        <name>Mn(2+)</name>
        <dbReference type="ChEBI" id="CHEBI:29035"/>
    </cofactor>
</comment>
<comment type="similarity">
    <text evidence="1">Belongs to the NAD-dependent DNA ligase family. LigA subfamily.</text>
</comment>
<protein>
    <recommendedName>
        <fullName evidence="1">DNA ligase</fullName>
        <ecNumber evidence="1">6.5.1.2</ecNumber>
    </recommendedName>
    <alternativeName>
        <fullName evidence="1">Polydeoxyribonucleotide synthase [NAD(+)]</fullName>
    </alternativeName>
</protein>
<organism>
    <name type="scientific">Campylobacter jejuni subsp. jejuni serotype O:23/36 (strain 81-176)</name>
    <dbReference type="NCBI Taxonomy" id="354242"/>
    <lineage>
        <taxon>Bacteria</taxon>
        <taxon>Pseudomonadati</taxon>
        <taxon>Campylobacterota</taxon>
        <taxon>Epsilonproteobacteria</taxon>
        <taxon>Campylobacterales</taxon>
        <taxon>Campylobacteraceae</taxon>
        <taxon>Campylobacter</taxon>
    </lineage>
</organism>
<sequence>MKKEEYLEKVALANLWMRAYYEKDEPLASDEEYDVLIRELRVFEEQNKDEISKDSPTQKIAPTIQSEFKKIAHLKRMWSMEDVFDESELRAWAKRAKCEKNFFIEPKFDGASLNLLYENGKLVSGATRGDGEVGEDITLNVFEIENIPKNIAYKERIEIRGEVVILKDDFEKINEKRALLNQSLFANPRNAASGSLRQLDTSITKERNLKFYPWGVGENTLNFTKHSEVMQFIRELGFLKDDFIKLCANLDEVLKAYDELLALREKKPMMMDGMVVRIDDLALCEELGYTVKFPKFMAAFKFPALEKTTRLIGVNLQVGRSGVITPVAVLEPVNLDGVVVKSATLHNFDEIARLDVKINDFVSVIRSGDVIPKITKVFKDRREGLEMEISRPKLCPTCQSELLDEGTLIKCQNIDCEDRLVNSIIHFVSKKCLNIDGLGENIVELLYKHKKITTLESIFHLKFSDFEGLEGFKEKKINNLLNAIEQARECELFRFITALGIEHIGEVAAKKLSLSFGKEWHKQSFEAYANLEGFGEQMALSLCEFTRVNHVRIDEFYKLLNLKIEKLEIKSDGVIFGKTFVITGTLSRPRDEFKALIEKLGGKVSSSVSKKTDYVLFGEEAGSKLIKAKELEVKCIDESAFNELVKE</sequence>
<name>DNLJ_CAMJJ</name>
<reference key="1">
    <citation type="submission" date="2006-12" db="EMBL/GenBank/DDBJ databases">
        <authorList>
            <person name="Fouts D.E."/>
            <person name="Nelson K.E."/>
            <person name="Sebastian Y."/>
        </authorList>
    </citation>
    <scope>NUCLEOTIDE SEQUENCE [LARGE SCALE GENOMIC DNA]</scope>
    <source>
        <strain>81-176</strain>
    </source>
</reference>
<keyword id="KW-0227">DNA damage</keyword>
<keyword id="KW-0234">DNA repair</keyword>
<keyword id="KW-0235">DNA replication</keyword>
<keyword id="KW-0436">Ligase</keyword>
<keyword id="KW-0460">Magnesium</keyword>
<keyword id="KW-0464">Manganese</keyword>
<keyword id="KW-0479">Metal-binding</keyword>
<keyword id="KW-0520">NAD</keyword>
<keyword id="KW-0862">Zinc</keyword>
<gene>
    <name evidence="1" type="primary">ligA</name>
    <name type="ordered locus">CJJ81176_0614</name>
</gene>
<accession>A1VYU6</accession>
<evidence type="ECO:0000255" key="1">
    <source>
        <dbReference type="HAMAP-Rule" id="MF_01588"/>
    </source>
</evidence>
<feature type="chain" id="PRO_0000313178" description="DNA ligase">
    <location>
        <begin position="1"/>
        <end position="647"/>
    </location>
</feature>
<feature type="domain" description="BRCT" evidence="1">
    <location>
        <begin position="570"/>
        <end position="647"/>
    </location>
</feature>
<feature type="active site" description="N6-AMP-lysine intermediate" evidence="1">
    <location>
        <position position="107"/>
    </location>
</feature>
<feature type="binding site" evidence="1">
    <location>
        <begin position="30"/>
        <end position="34"/>
    </location>
    <ligand>
        <name>NAD(+)</name>
        <dbReference type="ChEBI" id="CHEBI:57540"/>
    </ligand>
</feature>
<feature type="binding site" evidence="1">
    <location>
        <begin position="79"/>
        <end position="80"/>
    </location>
    <ligand>
        <name>NAD(+)</name>
        <dbReference type="ChEBI" id="CHEBI:57540"/>
    </ligand>
</feature>
<feature type="binding site" evidence="1">
    <location>
        <position position="105"/>
    </location>
    <ligand>
        <name>NAD(+)</name>
        <dbReference type="ChEBI" id="CHEBI:57540"/>
    </ligand>
</feature>
<feature type="binding site" evidence="1">
    <location>
        <position position="128"/>
    </location>
    <ligand>
        <name>NAD(+)</name>
        <dbReference type="ChEBI" id="CHEBI:57540"/>
    </ligand>
</feature>
<feature type="binding site" evidence="1">
    <location>
        <position position="162"/>
    </location>
    <ligand>
        <name>NAD(+)</name>
        <dbReference type="ChEBI" id="CHEBI:57540"/>
    </ligand>
</feature>
<feature type="binding site" evidence="1">
    <location>
        <position position="301"/>
    </location>
    <ligand>
        <name>NAD(+)</name>
        <dbReference type="ChEBI" id="CHEBI:57540"/>
    </ligand>
</feature>
<feature type="binding site" evidence="1">
    <location>
        <position position="395"/>
    </location>
    <ligand>
        <name>Zn(2+)</name>
        <dbReference type="ChEBI" id="CHEBI:29105"/>
    </ligand>
</feature>
<feature type="binding site" evidence="1">
    <location>
        <position position="398"/>
    </location>
    <ligand>
        <name>Zn(2+)</name>
        <dbReference type="ChEBI" id="CHEBI:29105"/>
    </ligand>
</feature>
<feature type="binding site" evidence="1">
    <location>
        <position position="411"/>
    </location>
    <ligand>
        <name>Zn(2+)</name>
        <dbReference type="ChEBI" id="CHEBI:29105"/>
    </ligand>
</feature>
<feature type="binding site" evidence="1">
    <location>
        <position position="416"/>
    </location>
    <ligand>
        <name>Zn(2+)</name>
        <dbReference type="ChEBI" id="CHEBI:29105"/>
    </ligand>
</feature>
<dbReference type="EC" id="6.5.1.2" evidence="1"/>
<dbReference type="EMBL" id="CP000538">
    <property type="protein sequence ID" value="EAQ73015.1"/>
    <property type="molecule type" value="Genomic_DNA"/>
</dbReference>
<dbReference type="RefSeq" id="WP_002868892.1">
    <property type="nucleotide sequence ID" value="NC_008787.1"/>
</dbReference>
<dbReference type="SMR" id="A1VYU6"/>
<dbReference type="KEGG" id="cjj:CJJ81176_0614"/>
<dbReference type="eggNOG" id="COG0272">
    <property type="taxonomic scope" value="Bacteria"/>
</dbReference>
<dbReference type="HOGENOM" id="CLU_007764_2_1_7"/>
<dbReference type="Proteomes" id="UP000000646">
    <property type="component" value="Chromosome"/>
</dbReference>
<dbReference type="GO" id="GO:0005829">
    <property type="term" value="C:cytosol"/>
    <property type="evidence" value="ECO:0007669"/>
    <property type="project" value="TreeGrafter"/>
</dbReference>
<dbReference type="GO" id="GO:0003911">
    <property type="term" value="F:DNA ligase (NAD+) activity"/>
    <property type="evidence" value="ECO:0007669"/>
    <property type="project" value="UniProtKB-UniRule"/>
</dbReference>
<dbReference type="GO" id="GO:0046872">
    <property type="term" value="F:metal ion binding"/>
    <property type="evidence" value="ECO:0007669"/>
    <property type="project" value="UniProtKB-KW"/>
</dbReference>
<dbReference type="GO" id="GO:0006281">
    <property type="term" value="P:DNA repair"/>
    <property type="evidence" value="ECO:0007669"/>
    <property type="project" value="UniProtKB-KW"/>
</dbReference>
<dbReference type="GO" id="GO:0006260">
    <property type="term" value="P:DNA replication"/>
    <property type="evidence" value="ECO:0007669"/>
    <property type="project" value="UniProtKB-KW"/>
</dbReference>
<dbReference type="CDD" id="cd17748">
    <property type="entry name" value="BRCT_DNA_ligase_like"/>
    <property type="match status" value="1"/>
</dbReference>
<dbReference type="CDD" id="cd00114">
    <property type="entry name" value="LIGANc"/>
    <property type="match status" value="1"/>
</dbReference>
<dbReference type="FunFam" id="2.40.50.140:FF:000012">
    <property type="entry name" value="DNA ligase"/>
    <property type="match status" value="1"/>
</dbReference>
<dbReference type="Gene3D" id="1.10.150.20">
    <property type="entry name" value="5' to 3' exonuclease, C-terminal subdomain"/>
    <property type="match status" value="2"/>
</dbReference>
<dbReference type="Gene3D" id="3.40.50.10190">
    <property type="entry name" value="BRCT domain"/>
    <property type="match status" value="1"/>
</dbReference>
<dbReference type="Gene3D" id="3.30.470.30">
    <property type="entry name" value="DNA ligase/mRNA capping enzyme"/>
    <property type="match status" value="1"/>
</dbReference>
<dbReference type="Gene3D" id="1.10.287.610">
    <property type="entry name" value="Helix hairpin bin"/>
    <property type="match status" value="1"/>
</dbReference>
<dbReference type="Gene3D" id="2.40.50.140">
    <property type="entry name" value="Nucleic acid-binding proteins"/>
    <property type="match status" value="1"/>
</dbReference>
<dbReference type="HAMAP" id="MF_01588">
    <property type="entry name" value="DNA_ligase_A"/>
    <property type="match status" value="1"/>
</dbReference>
<dbReference type="InterPro" id="IPR001357">
    <property type="entry name" value="BRCT_dom"/>
</dbReference>
<dbReference type="InterPro" id="IPR036420">
    <property type="entry name" value="BRCT_dom_sf"/>
</dbReference>
<dbReference type="InterPro" id="IPR041663">
    <property type="entry name" value="DisA/LigA_HHH"/>
</dbReference>
<dbReference type="InterPro" id="IPR001679">
    <property type="entry name" value="DNA_ligase"/>
</dbReference>
<dbReference type="InterPro" id="IPR018239">
    <property type="entry name" value="DNA_ligase_AS"/>
</dbReference>
<dbReference type="InterPro" id="IPR033136">
    <property type="entry name" value="DNA_ligase_CS"/>
</dbReference>
<dbReference type="InterPro" id="IPR013839">
    <property type="entry name" value="DNAligase_adenylation"/>
</dbReference>
<dbReference type="InterPro" id="IPR013840">
    <property type="entry name" value="DNAligase_N"/>
</dbReference>
<dbReference type="InterPro" id="IPR012340">
    <property type="entry name" value="NA-bd_OB-fold"/>
</dbReference>
<dbReference type="InterPro" id="IPR004150">
    <property type="entry name" value="NAD_DNA_ligase_OB"/>
</dbReference>
<dbReference type="InterPro" id="IPR010994">
    <property type="entry name" value="RuvA_2-like"/>
</dbReference>
<dbReference type="NCBIfam" id="TIGR00575">
    <property type="entry name" value="dnlj"/>
    <property type="match status" value="1"/>
</dbReference>
<dbReference type="NCBIfam" id="NF005932">
    <property type="entry name" value="PRK07956.1"/>
    <property type="match status" value="1"/>
</dbReference>
<dbReference type="PANTHER" id="PTHR23389">
    <property type="entry name" value="CHROMOSOME TRANSMISSION FIDELITY FACTOR 18"/>
    <property type="match status" value="1"/>
</dbReference>
<dbReference type="PANTHER" id="PTHR23389:SF9">
    <property type="entry name" value="DNA LIGASE"/>
    <property type="match status" value="1"/>
</dbReference>
<dbReference type="Pfam" id="PF00533">
    <property type="entry name" value="BRCT"/>
    <property type="match status" value="1"/>
</dbReference>
<dbReference type="Pfam" id="PF01653">
    <property type="entry name" value="DNA_ligase_aden"/>
    <property type="match status" value="1"/>
</dbReference>
<dbReference type="Pfam" id="PF03120">
    <property type="entry name" value="DNA_ligase_OB"/>
    <property type="match status" value="1"/>
</dbReference>
<dbReference type="Pfam" id="PF12826">
    <property type="entry name" value="HHH_2"/>
    <property type="match status" value="1"/>
</dbReference>
<dbReference type="PIRSF" id="PIRSF001604">
    <property type="entry name" value="LigA"/>
    <property type="match status" value="1"/>
</dbReference>
<dbReference type="SMART" id="SM00292">
    <property type="entry name" value="BRCT"/>
    <property type="match status" value="1"/>
</dbReference>
<dbReference type="SMART" id="SM00532">
    <property type="entry name" value="LIGANc"/>
    <property type="match status" value="1"/>
</dbReference>
<dbReference type="SUPFAM" id="SSF52113">
    <property type="entry name" value="BRCT domain"/>
    <property type="match status" value="1"/>
</dbReference>
<dbReference type="SUPFAM" id="SSF56091">
    <property type="entry name" value="DNA ligase/mRNA capping enzyme, catalytic domain"/>
    <property type="match status" value="1"/>
</dbReference>
<dbReference type="SUPFAM" id="SSF50249">
    <property type="entry name" value="Nucleic acid-binding proteins"/>
    <property type="match status" value="1"/>
</dbReference>
<dbReference type="SUPFAM" id="SSF47781">
    <property type="entry name" value="RuvA domain 2-like"/>
    <property type="match status" value="1"/>
</dbReference>
<dbReference type="PROSITE" id="PS50172">
    <property type="entry name" value="BRCT"/>
    <property type="match status" value="1"/>
</dbReference>
<dbReference type="PROSITE" id="PS01055">
    <property type="entry name" value="DNA_LIGASE_N1"/>
    <property type="match status" value="1"/>
</dbReference>
<dbReference type="PROSITE" id="PS01056">
    <property type="entry name" value="DNA_LIGASE_N2"/>
    <property type="match status" value="1"/>
</dbReference>
<proteinExistence type="inferred from homology"/>